<comment type="function">
    <text evidence="1">Catalyzes the formation of acetyl phosphate from acetate and ATP. Can also catalyze the reverse reaction.</text>
</comment>
<comment type="catalytic activity">
    <reaction evidence="1">
        <text>acetate + ATP = acetyl phosphate + ADP</text>
        <dbReference type="Rhea" id="RHEA:11352"/>
        <dbReference type="ChEBI" id="CHEBI:22191"/>
        <dbReference type="ChEBI" id="CHEBI:30089"/>
        <dbReference type="ChEBI" id="CHEBI:30616"/>
        <dbReference type="ChEBI" id="CHEBI:456216"/>
        <dbReference type="EC" id="2.7.2.1"/>
    </reaction>
</comment>
<comment type="cofactor">
    <cofactor evidence="1">
        <name>Mg(2+)</name>
        <dbReference type="ChEBI" id="CHEBI:18420"/>
    </cofactor>
    <cofactor evidence="1">
        <name>Mn(2+)</name>
        <dbReference type="ChEBI" id="CHEBI:29035"/>
    </cofactor>
    <text evidence="1">Mg(2+). Can also accept Mn(2+).</text>
</comment>
<comment type="pathway">
    <text evidence="1">Metabolic intermediate biosynthesis; acetyl-CoA biosynthesis; acetyl-CoA from acetate: step 1/2.</text>
</comment>
<comment type="subunit">
    <text evidence="1">Homodimer.</text>
</comment>
<comment type="subcellular location">
    <subcellularLocation>
        <location evidence="1">Cytoplasm</location>
    </subcellularLocation>
</comment>
<comment type="similarity">
    <text evidence="1">Belongs to the acetokinase family.</text>
</comment>
<protein>
    <recommendedName>
        <fullName evidence="1">Acetate kinase</fullName>
        <ecNumber evidence="1">2.7.2.1</ecNumber>
    </recommendedName>
    <alternativeName>
        <fullName evidence="1">Acetokinase</fullName>
    </alternativeName>
</protein>
<name>ACKA_CLOBL</name>
<accession>A7GG48</accession>
<organism>
    <name type="scientific">Clostridium botulinum (strain Langeland / NCTC 10281 / Type F)</name>
    <dbReference type="NCBI Taxonomy" id="441772"/>
    <lineage>
        <taxon>Bacteria</taxon>
        <taxon>Bacillati</taxon>
        <taxon>Bacillota</taxon>
        <taxon>Clostridia</taxon>
        <taxon>Eubacteriales</taxon>
        <taxon>Clostridiaceae</taxon>
        <taxon>Clostridium</taxon>
    </lineage>
</organism>
<feature type="chain" id="PRO_1000002222" description="Acetate kinase">
    <location>
        <begin position="1"/>
        <end position="397"/>
    </location>
</feature>
<feature type="active site" description="Proton donor/acceptor" evidence="1">
    <location>
        <position position="147"/>
    </location>
</feature>
<feature type="binding site" evidence="1">
    <location>
        <position position="7"/>
    </location>
    <ligand>
        <name>Mg(2+)</name>
        <dbReference type="ChEBI" id="CHEBI:18420"/>
    </ligand>
</feature>
<feature type="binding site" evidence="1">
    <location>
        <position position="14"/>
    </location>
    <ligand>
        <name>ATP</name>
        <dbReference type="ChEBI" id="CHEBI:30616"/>
    </ligand>
</feature>
<feature type="binding site" evidence="1">
    <location>
        <position position="90"/>
    </location>
    <ligand>
        <name>substrate</name>
    </ligand>
</feature>
<feature type="binding site" evidence="1">
    <location>
        <begin position="207"/>
        <end position="211"/>
    </location>
    <ligand>
        <name>ATP</name>
        <dbReference type="ChEBI" id="CHEBI:30616"/>
    </ligand>
</feature>
<feature type="binding site" evidence="1">
    <location>
        <begin position="282"/>
        <end position="284"/>
    </location>
    <ligand>
        <name>ATP</name>
        <dbReference type="ChEBI" id="CHEBI:30616"/>
    </ligand>
</feature>
<feature type="binding site" evidence="1">
    <location>
        <begin position="330"/>
        <end position="334"/>
    </location>
    <ligand>
        <name>ATP</name>
        <dbReference type="ChEBI" id="CHEBI:30616"/>
    </ligand>
</feature>
<feature type="binding site" evidence="1">
    <location>
        <position position="383"/>
    </location>
    <ligand>
        <name>Mg(2+)</name>
        <dbReference type="ChEBI" id="CHEBI:18420"/>
    </ligand>
</feature>
<feature type="site" description="Transition state stabilizer" evidence="1">
    <location>
        <position position="179"/>
    </location>
</feature>
<feature type="site" description="Transition state stabilizer" evidence="1">
    <location>
        <position position="240"/>
    </location>
</feature>
<dbReference type="EC" id="2.7.2.1" evidence="1"/>
<dbReference type="EMBL" id="CP000728">
    <property type="protein sequence ID" value="ABS42544.1"/>
    <property type="molecule type" value="Genomic_DNA"/>
</dbReference>
<dbReference type="RefSeq" id="WP_012100397.1">
    <property type="nucleotide sequence ID" value="NC_009699.1"/>
</dbReference>
<dbReference type="SMR" id="A7GG48"/>
<dbReference type="KEGG" id="cbf:CLI_2516"/>
<dbReference type="HOGENOM" id="CLU_020352_0_1_9"/>
<dbReference type="UniPathway" id="UPA00340">
    <property type="reaction ID" value="UER00458"/>
</dbReference>
<dbReference type="Proteomes" id="UP000002410">
    <property type="component" value="Chromosome"/>
</dbReference>
<dbReference type="GO" id="GO:0005737">
    <property type="term" value="C:cytoplasm"/>
    <property type="evidence" value="ECO:0007669"/>
    <property type="project" value="UniProtKB-SubCell"/>
</dbReference>
<dbReference type="GO" id="GO:0008776">
    <property type="term" value="F:acetate kinase activity"/>
    <property type="evidence" value="ECO:0007669"/>
    <property type="project" value="UniProtKB-UniRule"/>
</dbReference>
<dbReference type="GO" id="GO:0005524">
    <property type="term" value="F:ATP binding"/>
    <property type="evidence" value="ECO:0007669"/>
    <property type="project" value="UniProtKB-KW"/>
</dbReference>
<dbReference type="GO" id="GO:0000287">
    <property type="term" value="F:magnesium ion binding"/>
    <property type="evidence" value="ECO:0007669"/>
    <property type="project" value="UniProtKB-UniRule"/>
</dbReference>
<dbReference type="GO" id="GO:0006083">
    <property type="term" value="P:acetate metabolic process"/>
    <property type="evidence" value="ECO:0007669"/>
    <property type="project" value="TreeGrafter"/>
</dbReference>
<dbReference type="GO" id="GO:0006085">
    <property type="term" value="P:acetyl-CoA biosynthetic process"/>
    <property type="evidence" value="ECO:0007669"/>
    <property type="project" value="UniProtKB-UniRule"/>
</dbReference>
<dbReference type="CDD" id="cd24010">
    <property type="entry name" value="ASKHA_NBD_AcK_PK"/>
    <property type="match status" value="1"/>
</dbReference>
<dbReference type="Gene3D" id="3.30.420.40">
    <property type="match status" value="2"/>
</dbReference>
<dbReference type="HAMAP" id="MF_00020">
    <property type="entry name" value="Acetate_kinase"/>
    <property type="match status" value="1"/>
</dbReference>
<dbReference type="InterPro" id="IPR004372">
    <property type="entry name" value="Ac/propionate_kinase"/>
</dbReference>
<dbReference type="InterPro" id="IPR000890">
    <property type="entry name" value="Aliphatic_acid_kin_short-chain"/>
</dbReference>
<dbReference type="InterPro" id="IPR023865">
    <property type="entry name" value="Aliphatic_acid_kinase_CS"/>
</dbReference>
<dbReference type="InterPro" id="IPR043129">
    <property type="entry name" value="ATPase_NBD"/>
</dbReference>
<dbReference type="NCBIfam" id="TIGR00016">
    <property type="entry name" value="ackA"/>
    <property type="match status" value="1"/>
</dbReference>
<dbReference type="PANTHER" id="PTHR21060">
    <property type="entry name" value="ACETATE KINASE"/>
    <property type="match status" value="1"/>
</dbReference>
<dbReference type="PANTHER" id="PTHR21060:SF15">
    <property type="entry name" value="ACETATE KINASE-RELATED"/>
    <property type="match status" value="1"/>
</dbReference>
<dbReference type="Pfam" id="PF00871">
    <property type="entry name" value="Acetate_kinase"/>
    <property type="match status" value="1"/>
</dbReference>
<dbReference type="PIRSF" id="PIRSF000722">
    <property type="entry name" value="Acetate_prop_kin"/>
    <property type="match status" value="1"/>
</dbReference>
<dbReference type="PRINTS" id="PR00471">
    <property type="entry name" value="ACETATEKNASE"/>
</dbReference>
<dbReference type="SUPFAM" id="SSF53067">
    <property type="entry name" value="Actin-like ATPase domain"/>
    <property type="match status" value="2"/>
</dbReference>
<dbReference type="PROSITE" id="PS01075">
    <property type="entry name" value="ACETATE_KINASE_1"/>
    <property type="match status" value="1"/>
</dbReference>
<dbReference type="PROSITE" id="PS01076">
    <property type="entry name" value="ACETATE_KINASE_2"/>
    <property type="match status" value="1"/>
</dbReference>
<proteinExistence type="inferred from homology"/>
<reference key="1">
    <citation type="submission" date="2007-06" db="EMBL/GenBank/DDBJ databases">
        <authorList>
            <person name="Brinkac L.M."/>
            <person name="Daugherty S."/>
            <person name="Dodson R.J."/>
            <person name="Madupu R."/>
            <person name="Brown J.L."/>
            <person name="Bruce D."/>
            <person name="Detter C."/>
            <person name="Munk C."/>
            <person name="Smith L.A."/>
            <person name="Smith T.J."/>
            <person name="White O."/>
            <person name="Brettin T.S."/>
        </authorList>
    </citation>
    <scope>NUCLEOTIDE SEQUENCE [LARGE SCALE GENOMIC DNA]</scope>
    <source>
        <strain>Langeland / NCTC 10281 / Type F</strain>
    </source>
</reference>
<evidence type="ECO:0000255" key="1">
    <source>
        <dbReference type="HAMAP-Rule" id="MF_00020"/>
    </source>
</evidence>
<sequence>MKILVVNCGSSSLKYQLIDMTSEEALAKGLVERIGIEGSILTQKVNGEKYIIEEPMKDHKKAIELVLQALVDKEHGVISDMSEIAAVGHRVVHGGEKYASSVLINDEVMKALEDCVKLAPLHNPPNIIGINACRELMPKTPMVAVFDTAFHQTLPDYAYMYPLPYELYEQNGIRKYGFHGTSHRYVSSVASEMMEKDLKDIKVITCHLGNGASLCAVKEGKSVETSMGFTPLAGLAMGTRCGDIDPAILLFMERELKMSPDEVDTVINKKSGVLGISGVSSDFRDIEGAAEEGNKRAKLALDVYHYTVRQTIGAYTAVLNGVDAIVFTAGLGENSAASREEILNGLEYLGIKIDAEKNKQRGKQIEISTEDSKVKVFVIPTDEELMIARDTKEITAK</sequence>
<gene>
    <name evidence="1" type="primary">ackA</name>
    <name type="ordered locus">CLI_2516</name>
</gene>
<keyword id="KW-0067">ATP-binding</keyword>
<keyword id="KW-0963">Cytoplasm</keyword>
<keyword id="KW-0418">Kinase</keyword>
<keyword id="KW-0460">Magnesium</keyword>
<keyword id="KW-0479">Metal-binding</keyword>
<keyword id="KW-0547">Nucleotide-binding</keyword>
<keyword id="KW-0808">Transferase</keyword>